<dbReference type="EMBL" id="M91190">
    <property type="protein sequence ID" value="AAA33731.1"/>
    <property type="molecule type" value="mRNA"/>
</dbReference>
<dbReference type="PIR" id="JQ1689">
    <property type="entry name" value="JQ1689"/>
</dbReference>
<dbReference type="SMR" id="Q03488"/>
<dbReference type="IntAct" id="Q03488">
    <property type="interactions" value="1"/>
</dbReference>
<dbReference type="GO" id="GO:0005634">
    <property type="term" value="C:nucleus"/>
    <property type="evidence" value="ECO:0007669"/>
    <property type="project" value="UniProtKB-SubCell"/>
</dbReference>
<dbReference type="GO" id="GO:0003700">
    <property type="term" value="F:DNA-binding transcription factor activity"/>
    <property type="evidence" value="ECO:0007669"/>
    <property type="project" value="InterPro"/>
</dbReference>
<dbReference type="GO" id="GO:0046983">
    <property type="term" value="F:protein dimerization activity"/>
    <property type="evidence" value="ECO:0007669"/>
    <property type="project" value="InterPro"/>
</dbReference>
<dbReference type="GO" id="GO:0000977">
    <property type="term" value="F:RNA polymerase II transcription regulatory region sequence-specific DNA binding"/>
    <property type="evidence" value="ECO:0007669"/>
    <property type="project" value="InterPro"/>
</dbReference>
<dbReference type="GO" id="GO:0045944">
    <property type="term" value="P:positive regulation of transcription by RNA polymerase II"/>
    <property type="evidence" value="ECO:0007669"/>
    <property type="project" value="InterPro"/>
</dbReference>
<dbReference type="CDD" id="cd00265">
    <property type="entry name" value="MADS_MEF2_like"/>
    <property type="match status" value="1"/>
</dbReference>
<dbReference type="Gene3D" id="3.40.1810.10">
    <property type="entry name" value="Transcription factor, MADS-box"/>
    <property type="match status" value="1"/>
</dbReference>
<dbReference type="InterPro" id="IPR050142">
    <property type="entry name" value="MADS-box/MEF2_TF"/>
</dbReference>
<dbReference type="InterPro" id="IPR033896">
    <property type="entry name" value="MEF2-like_N"/>
</dbReference>
<dbReference type="InterPro" id="IPR002487">
    <property type="entry name" value="TF_Kbox"/>
</dbReference>
<dbReference type="InterPro" id="IPR002100">
    <property type="entry name" value="TF_MADSbox"/>
</dbReference>
<dbReference type="InterPro" id="IPR036879">
    <property type="entry name" value="TF_MADSbox_sf"/>
</dbReference>
<dbReference type="PANTHER" id="PTHR48019">
    <property type="entry name" value="SERUM RESPONSE FACTOR HOMOLOG"/>
    <property type="match status" value="1"/>
</dbReference>
<dbReference type="Pfam" id="PF01486">
    <property type="entry name" value="K-box"/>
    <property type="match status" value="1"/>
</dbReference>
<dbReference type="Pfam" id="PF00319">
    <property type="entry name" value="SRF-TF"/>
    <property type="match status" value="1"/>
</dbReference>
<dbReference type="PRINTS" id="PR00404">
    <property type="entry name" value="MADSDOMAIN"/>
</dbReference>
<dbReference type="SMART" id="SM00432">
    <property type="entry name" value="MADS"/>
    <property type="match status" value="1"/>
</dbReference>
<dbReference type="SUPFAM" id="SSF55455">
    <property type="entry name" value="SRF-like"/>
    <property type="match status" value="1"/>
</dbReference>
<dbReference type="PROSITE" id="PS51297">
    <property type="entry name" value="K_BOX"/>
    <property type="match status" value="1"/>
</dbReference>
<dbReference type="PROSITE" id="PS00350">
    <property type="entry name" value="MADS_BOX_1"/>
    <property type="match status" value="1"/>
</dbReference>
<dbReference type="PROSITE" id="PS50066">
    <property type="entry name" value="MADS_BOX_2"/>
    <property type="match status" value="1"/>
</dbReference>
<comment type="function">
    <text>Probable transcription factor.</text>
</comment>
<comment type="subcellular location">
    <subcellularLocation>
        <location>Nucleus</location>
    </subcellularLocation>
</comment>
<comment type="tissue specificity">
    <text>Petals.</text>
</comment>
<proteinExistence type="evidence at transcript level"/>
<organism>
    <name type="scientific">Petunia hybrida</name>
    <name type="common">Petunia</name>
    <dbReference type="NCBI Taxonomy" id="4102"/>
    <lineage>
        <taxon>Eukaryota</taxon>
        <taxon>Viridiplantae</taxon>
        <taxon>Streptophyta</taxon>
        <taxon>Embryophyta</taxon>
        <taxon>Tracheophyta</taxon>
        <taxon>Spermatophyta</taxon>
        <taxon>Magnoliopsida</taxon>
        <taxon>eudicotyledons</taxon>
        <taxon>Gunneridae</taxon>
        <taxon>Pentapetalae</taxon>
        <taxon>asterids</taxon>
        <taxon>lamiids</taxon>
        <taxon>Solanales</taxon>
        <taxon>Solanaceae</taxon>
        <taxon>Petunioideae</taxon>
        <taxon>Petunia</taxon>
    </lineage>
</organism>
<protein>
    <recommendedName>
        <fullName>Floral homeotic protein FBP1</fullName>
    </recommendedName>
    <alternativeName>
        <fullName>Floral-binding protein 1</fullName>
    </alternativeName>
</protein>
<keyword id="KW-0238">DNA-binding</keyword>
<keyword id="KW-0539">Nucleus</keyword>
<keyword id="KW-0804">Transcription</keyword>
<keyword id="KW-0805">Transcription regulation</keyword>
<evidence type="ECO:0000255" key="1">
    <source>
        <dbReference type="PROSITE-ProRule" id="PRU00251"/>
    </source>
</evidence>
<evidence type="ECO:0000255" key="2">
    <source>
        <dbReference type="PROSITE-ProRule" id="PRU00629"/>
    </source>
</evidence>
<name>FBP1_PETHY</name>
<sequence length="210" mass="24647">MGRGKIEIKRIENSSNRQVTYSKRRNGILKKAKEISVLCDARVSVIIFASSGKMHEFSSTSLVDILDQYHKLTGRRLLDAKHENLDNEINKVKKDNDNMQIELRHLKGEDITSLNHRELMILEDALENGLTSIRNKQNEVLRMMRKKTQSMEEEQDQLNCQLRQLEIATMNRNMGEIGEVFQQRENHDYQNHMPFAFRVQPMQPNLQERL</sequence>
<accession>Q03488</accession>
<gene>
    <name type="primary">FBP1</name>
</gene>
<reference key="1">
    <citation type="journal article" date="1992" name="Plant Cell">
        <title>Differential expression of two MADS box genes in wild-type and mutant petunia flowers.</title>
        <authorList>
            <person name="Angenent G.C."/>
            <person name="Busscher M."/>
            <person name="Franken J."/>
            <person name="Mol J.N.M."/>
            <person name="van Tunen A.J."/>
        </authorList>
    </citation>
    <scope>NUCLEOTIDE SEQUENCE [MRNA]</scope>
</reference>
<feature type="chain" id="PRO_0000199489" description="Floral homeotic protein FBP1">
    <location>
        <begin position="1"/>
        <end position="210"/>
    </location>
</feature>
<feature type="domain" description="MADS-box" evidence="1">
    <location>
        <begin position="3"/>
        <end position="57"/>
    </location>
</feature>
<feature type="domain" description="K-box" evidence="2">
    <location>
        <begin position="82"/>
        <end position="173"/>
    </location>
</feature>